<gene>
    <name type="primary">y16H</name>
    <name type="synonym">motA.1</name>
</gene>
<dbReference type="EMBL" id="AF158101">
    <property type="protein sequence ID" value="AAD42608.1"/>
    <property type="molecule type" value="Genomic_DNA"/>
</dbReference>
<dbReference type="RefSeq" id="NP_049874.1">
    <property type="nucleotide sequence ID" value="NC_000866.4"/>
</dbReference>
<dbReference type="SMR" id="P39512"/>
<dbReference type="GeneID" id="1258724"/>
<dbReference type="KEGG" id="vg:1258724"/>
<dbReference type="Proteomes" id="UP000009087">
    <property type="component" value="Segment"/>
</dbReference>
<accession>P39512</accession>
<reference key="1">
    <citation type="journal article" date="2003" name="Microbiol. Mol. Biol. Rev.">
        <title>Bacteriophage T4 genome.</title>
        <authorList>
            <person name="Miller E.S."/>
            <person name="Kutter E."/>
            <person name="Mosig G."/>
            <person name="Arisaka F."/>
            <person name="Kunisawa T."/>
            <person name="Ruger W."/>
        </authorList>
    </citation>
    <scope>NUCLEOTIDE SEQUENCE [LARGE SCALE GENOMIC DNA]</scope>
</reference>
<organismHost>
    <name type="scientific">Escherichia coli</name>
    <dbReference type="NCBI Taxonomy" id="562"/>
</organismHost>
<keyword id="KW-1185">Reference proteome</keyword>
<proteinExistence type="predicted"/>
<sequence>MSPFIGITSAALVSGSILLAGLGVVPAVAGGLLAFGIQRVIMTVITVMQ</sequence>
<name>Y16H_BPT4</name>
<feature type="chain" id="PRO_0000165205" description="Uncharacterized 4.8 kDa protein in motA-Gp52 intergenic region">
    <location>
        <begin position="1"/>
        <end position="49"/>
    </location>
</feature>
<protein>
    <recommendedName>
        <fullName>Uncharacterized 4.8 kDa protein in motA-Gp52 intergenic region</fullName>
    </recommendedName>
</protein>
<organism>
    <name type="scientific">Enterobacteria phage T4</name>
    <name type="common">Bacteriophage T4</name>
    <dbReference type="NCBI Taxonomy" id="10665"/>
    <lineage>
        <taxon>Viruses</taxon>
        <taxon>Duplodnaviria</taxon>
        <taxon>Heunggongvirae</taxon>
        <taxon>Uroviricota</taxon>
        <taxon>Caudoviricetes</taxon>
        <taxon>Straboviridae</taxon>
        <taxon>Tevenvirinae</taxon>
        <taxon>Tequatrovirus</taxon>
    </lineage>
</organism>